<sequence length="493" mass="56759">MSLLKMEYNLYAELKKMTCGQPISLFNEDGDFVEVEPGSSFKFLIPKGFYSSPSVKTSLVFETLTTTDNKITSINPINAPKLYPLQRKVVSEVVSNMRKMIELKRPLYITLHLACGFGKTITTCYLMATHGRKTIICVPNKMLIHQWKTLVEAVGLEHKISIDGVSSLLKELKTQSPDVLIVVSRHLTNDAFCKYINKHYDLFILDESHTYNLMNNTAVTRFLAYYPPMMCYFLTATPRPANRIYCNSIINIAKLSDLKKTIYVVDSFFDPYSTDNIRHMIKRLDGPSNKYHIYTEKLLSVDEPRNQLILDTLVEEFKSGTINRILVITKLREHMVMFYKRLLDLFGPEVVFIGDAQNRRTPDMVKSIKELNRFIFVSTLFYSGTGLDIPSLDSLFICSAVINNMQIEQLLGRVCRETELLDRTVYVFPSTSIKEIKYMIGNFVQRIISLSVDKLGFKQESYRKHQESDPTSTCTTSSREERVLNRIFNSQNR</sequence>
<comment type="function">
    <text evidence="1">DNA helicase which seems to act as a postreplicative transcription termination factor. Involved in ATP-dependent release of nascent RNA. Forms a stable complex with single-stranded DNA, and to a lesser extent RNA (By similarity).</text>
</comment>
<comment type="subunit">
    <text evidence="1">Interacts with G2. Might be part of a transcription complex composed at least of G2, A18, and H5.</text>
</comment>
<comment type="subcellular location">
    <subcellularLocation>
        <location evidence="1">Virion</location>
    </subcellularLocation>
    <text evidence="1">Localizes to the virion core.</text>
</comment>
<comment type="similarity">
    <text evidence="4">Belongs to the helicase family. Poxviruses subfamily.</text>
</comment>
<organismHost>
    <name type="scientific">Mus musculus</name>
    <name type="common">Mouse</name>
    <dbReference type="NCBI Taxonomy" id="10090"/>
</organismHost>
<protein>
    <recommendedName>
        <fullName>Transcript termination protein A18</fullName>
        <ecNumber>3.6.4.-</ecNumber>
    </recommendedName>
</protein>
<keyword id="KW-0067">ATP-binding</keyword>
<keyword id="KW-0238">DNA-binding</keyword>
<keyword id="KW-0347">Helicase</keyword>
<keyword id="KW-0378">Hydrolase</keyword>
<keyword id="KW-0426">Late protein</keyword>
<keyword id="KW-0547">Nucleotide-binding</keyword>
<keyword id="KW-0804">Transcription</keyword>
<keyword id="KW-0946">Virion</keyword>
<evidence type="ECO:0000250" key="1"/>
<evidence type="ECO:0000255" key="2">
    <source>
        <dbReference type="PROSITE-ProRule" id="PRU00541"/>
    </source>
</evidence>
<evidence type="ECO:0000255" key="3">
    <source>
        <dbReference type="PROSITE-ProRule" id="PRU00542"/>
    </source>
</evidence>
<evidence type="ECO:0000305" key="4"/>
<dbReference type="EC" id="3.6.4.-"/>
<dbReference type="EMBL" id="AF012825">
    <property type="protein sequence ID" value="AAM92426.1"/>
    <property type="molecule type" value="Genomic_DNA"/>
</dbReference>
<dbReference type="RefSeq" id="NP_671640.1">
    <property type="nucleotide sequence ID" value="NC_004105.1"/>
</dbReference>
<dbReference type="GeneID" id="951582"/>
<dbReference type="KEGG" id="vg:951582"/>
<dbReference type="Proteomes" id="UP000172110">
    <property type="component" value="Segment"/>
</dbReference>
<dbReference type="GO" id="GO:0044423">
    <property type="term" value="C:virion component"/>
    <property type="evidence" value="ECO:0007669"/>
    <property type="project" value="UniProtKB-KW"/>
</dbReference>
<dbReference type="GO" id="GO:0005524">
    <property type="term" value="F:ATP binding"/>
    <property type="evidence" value="ECO:0007669"/>
    <property type="project" value="UniProtKB-KW"/>
</dbReference>
<dbReference type="GO" id="GO:0003677">
    <property type="term" value="F:DNA binding"/>
    <property type="evidence" value="ECO:0007669"/>
    <property type="project" value="UniProtKB-KW"/>
</dbReference>
<dbReference type="GO" id="GO:0004386">
    <property type="term" value="F:helicase activity"/>
    <property type="evidence" value="ECO:0007669"/>
    <property type="project" value="UniProtKB-KW"/>
</dbReference>
<dbReference type="GO" id="GO:0016787">
    <property type="term" value="F:hydrolase activity"/>
    <property type="evidence" value="ECO:0007669"/>
    <property type="project" value="UniProtKB-KW"/>
</dbReference>
<dbReference type="CDD" id="cd18785">
    <property type="entry name" value="SF2_C"/>
    <property type="match status" value="1"/>
</dbReference>
<dbReference type="Gene3D" id="3.40.50.300">
    <property type="entry name" value="P-loop containing nucleotide triphosphate hydrolases"/>
    <property type="match status" value="2"/>
</dbReference>
<dbReference type="InterPro" id="IPR006935">
    <property type="entry name" value="Helicase/UvrB_N"/>
</dbReference>
<dbReference type="InterPro" id="IPR014001">
    <property type="entry name" value="Helicase_ATP-bd"/>
</dbReference>
<dbReference type="InterPro" id="IPR050742">
    <property type="entry name" value="Helicase_Restrict-Modif_Enz"/>
</dbReference>
<dbReference type="InterPro" id="IPR027417">
    <property type="entry name" value="P-loop_NTPase"/>
</dbReference>
<dbReference type="PANTHER" id="PTHR47396:SF1">
    <property type="entry name" value="ATP-DEPENDENT HELICASE IRC3-RELATED"/>
    <property type="match status" value="1"/>
</dbReference>
<dbReference type="PANTHER" id="PTHR47396">
    <property type="entry name" value="TYPE I RESTRICTION ENZYME ECOKI R PROTEIN"/>
    <property type="match status" value="1"/>
</dbReference>
<dbReference type="Pfam" id="PF04851">
    <property type="entry name" value="ResIII"/>
    <property type="match status" value="1"/>
</dbReference>
<dbReference type="SMART" id="SM00487">
    <property type="entry name" value="DEXDc"/>
    <property type="match status" value="1"/>
</dbReference>
<dbReference type="SUPFAM" id="SSF52540">
    <property type="entry name" value="P-loop containing nucleoside triphosphate hydrolases"/>
    <property type="match status" value="1"/>
</dbReference>
<dbReference type="PROSITE" id="PS51192">
    <property type="entry name" value="HELICASE_ATP_BIND_1"/>
    <property type="match status" value="1"/>
</dbReference>
<dbReference type="PROSITE" id="PS51194">
    <property type="entry name" value="HELICASE_CTER"/>
    <property type="match status" value="1"/>
</dbReference>
<organism>
    <name type="scientific">Ectromelia virus (strain Moscow)</name>
    <name type="common">ECTV</name>
    <name type="synonym">Mousepox virus</name>
    <dbReference type="NCBI Taxonomy" id="265874"/>
    <lineage>
        <taxon>Viruses</taxon>
        <taxon>Varidnaviria</taxon>
        <taxon>Bamfordvirae</taxon>
        <taxon>Nucleocytoviricota</taxon>
        <taxon>Pokkesviricetes</taxon>
        <taxon>Chitovirales</taxon>
        <taxon>Poxviridae</taxon>
        <taxon>Chordopoxvirinae</taxon>
        <taxon>Orthopoxvirus</taxon>
        <taxon>Ectromelia virus</taxon>
    </lineage>
</organism>
<feature type="chain" id="PRO_0000102185" description="Transcript termination protein A18">
    <location>
        <begin position="1"/>
        <end position="493"/>
    </location>
</feature>
<feature type="domain" description="Helicase ATP-binding" evidence="2">
    <location>
        <begin position="100"/>
        <end position="256"/>
    </location>
</feature>
<feature type="domain" description="Helicase C-terminal" evidence="3">
    <location>
        <begin position="309"/>
        <end position="456"/>
    </location>
</feature>
<feature type="short sequence motif" description="DESH box">
    <location>
        <begin position="206"/>
        <end position="209"/>
    </location>
</feature>
<feature type="binding site" evidence="2">
    <location>
        <begin position="113"/>
        <end position="120"/>
    </location>
    <ligand>
        <name>ATP</name>
        <dbReference type="ChEBI" id="CHEBI:30616"/>
    </ligand>
</feature>
<name>A18_ECTVM</name>
<gene>
    <name type="ordered locus">EVM121</name>
</gene>
<proteinExistence type="inferred from homology"/>
<accession>Q8JL96</accession>
<reference key="1">
    <citation type="journal article" date="2003" name="Virology">
        <title>The genomic sequence of Ectromelia virus, the causative agent of mousepox.</title>
        <authorList>
            <person name="Chen N."/>
            <person name="Danila M.I."/>
            <person name="Feng Z."/>
            <person name="Buller R.M."/>
            <person name="Wang C."/>
            <person name="Han X."/>
            <person name="Lefkowitz E.J."/>
            <person name="Upton C."/>
        </authorList>
    </citation>
    <scope>NUCLEOTIDE SEQUENCE [LARGE SCALE GENOMIC DNA]</scope>
</reference>